<sequence length="292" mass="30917">MAAITASMVAELRAKTDAPMMECKKALTEADGDLNKAEELLRVKLGNKASKAASRVTAEGVVAAFIDGTTGALVELNCETDFVSKNDDFLAFSAKVAELVAKQNPADVAALSALEIDGVSVEATRTALIGKIGENMTIRRFARYANGGKLVSYLHGTRIGVMVEFDGDEAAAKDVAMHVAAMKPVSLSAEQVPADLIAKERSIAEQKAAESGKPAEIAAKMVEGSVQKYLKEVSLFNQPFVKNDKQTVEQMLKAANTTVKSFTLYVVGEGIEKKQDDFAAEVAAQVAAAQKG</sequence>
<accession>B3R2B6</accession>
<evidence type="ECO:0000255" key="1">
    <source>
        <dbReference type="HAMAP-Rule" id="MF_00050"/>
    </source>
</evidence>
<feature type="chain" id="PRO_1000116721" description="Elongation factor Ts">
    <location>
        <begin position="1"/>
        <end position="292"/>
    </location>
</feature>
<feature type="region of interest" description="Involved in Mg(2+) ion dislocation from EF-Tu" evidence="1">
    <location>
        <begin position="80"/>
        <end position="83"/>
    </location>
</feature>
<protein>
    <recommendedName>
        <fullName evidence="1">Elongation factor Ts</fullName>
        <shortName evidence="1">EF-Ts</shortName>
    </recommendedName>
</protein>
<reference key="1">
    <citation type="journal article" date="2008" name="Genome Res.">
        <title>Genome sequence of the beta-rhizobium Cupriavidus taiwanensis and comparative genomics of rhizobia.</title>
        <authorList>
            <person name="Amadou C."/>
            <person name="Pascal G."/>
            <person name="Mangenot S."/>
            <person name="Glew M."/>
            <person name="Bontemps C."/>
            <person name="Capela D."/>
            <person name="Carrere S."/>
            <person name="Cruveiller S."/>
            <person name="Dossat C."/>
            <person name="Lajus A."/>
            <person name="Marchetti M."/>
            <person name="Poinsot V."/>
            <person name="Rouy Z."/>
            <person name="Servin B."/>
            <person name="Saad M."/>
            <person name="Schenowitz C."/>
            <person name="Barbe V."/>
            <person name="Batut J."/>
            <person name="Medigue C."/>
            <person name="Masson-Boivin C."/>
        </authorList>
    </citation>
    <scope>NUCLEOTIDE SEQUENCE [LARGE SCALE GENOMIC DNA]</scope>
    <source>
        <strain>DSM 17343 / BCRC 17206 / CCUG 44338 / CIP 107171 / LMG 19424 / R1</strain>
    </source>
</reference>
<dbReference type="EMBL" id="CU633749">
    <property type="protein sequence ID" value="CAQ69633.1"/>
    <property type="molecule type" value="Genomic_DNA"/>
</dbReference>
<dbReference type="RefSeq" id="WP_012352953.1">
    <property type="nucleotide sequence ID" value="NC_010528.1"/>
</dbReference>
<dbReference type="SMR" id="B3R2B6"/>
<dbReference type="GeneID" id="29760871"/>
<dbReference type="KEGG" id="cti:RALTA_A1690"/>
<dbReference type="eggNOG" id="COG0264">
    <property type="taxonomic scope" value="Bacteria"/>
</dbReference>
<dbReference type="HOGENOM" id="CLU_047155_0_2_4"/>
<dbReference type="BioCyc" id="CTAI977880:RALTA_RS08125-MONOMER"/>
<dbReference type="Proteomes" id="UP000001692">
    <property type="component" value="Chromosome 1"/>
</dbReference>
<dbReference type="GO" id="GO:0005737">
    <property type="term" value="C:cytoplasm"/>
    <property type="evidence" value="ECO:0007669"/>
    <property type="project" value="UniProtKB-SubCell"/>
</dbReference>
<dbReference type="GO" id="GO:0003746">
    <property type="term" value="F:translation elongation factor activity"/>
    <property type="evidence" value="ECO:0007669"/>
    <property type="project" value="UniProtKB-UniRule"/>
</dbReference>
<dbReference type="CDD" id="cd14275">
    <property type="entry name" value="UBA_EF-Ts"/>
    <property type="match status" value="1"/>
</dbReference>
<dbReference type="FunFam" id="1.10.286.20:FF:000001">
    <property type="entry name" value="Elongation factor Ts"/>
    <property type="match status" value="1"/>
</dbReference>
<dbReference type="FunFam" id="1.10.8.10:FF:000001">
    <property type="entry name" value="Elongation factor Ts"/>
    <property type="match status" value="1"/>
</dbReference>
<dbReference type="Gene3D" id="1.10.286.20">
    <property type="match status" value="1"/>
</dbReference>
<dbReference type="Gene3D" id="1.10.8.10">
    <property type="entry name" value="DNA helicase RuvA subunit, C-terminal domain"/>
    <property type="match status" value="1"/>
</dbReference>
<dbReference type="Gene3D" id="3.30.479.20">
    <property type="entry name" value="Elongation factor Ts, dimerisation domain"/>
    <property type="match status" value="2"/>
</dbReference>
<dbReference type="HAMAP" id="MF_00050">
    <property type="entry name" value="EF_Ts"/>
    <property type="match status" value="1"/>
</dbReference>
<dbReference type="InterPro" id="IPR036402">
    <property type="entry name" value="EF-Ts_dimer_sf"/>
</dbReference>
<dbReference type="InterPro" id="IPR001816">
    <property type="entry name" value="Transl_elong_EFTs/EF1B"/>
</dbReference>
<dbReference type="InterPro" id="IPR014039">
    <property type="entry name" value="Transl_elong_EFTs/EF1B_dimer"/>
</dbReference>
<dbReference type="InterPro" id="IPR018101">
    <property type="entry name" value="Transl_elong_Ts_CS"/>
</dbReference>
<dbReference type="InterPro" id="IPR009060">
    <property type="entry name" value="UBA-like_sf"/>
</dbReference>
<dbReference type="NCBIfam" id="TIGR00116">
    <property type="entry name" value="tsf"/>
    <property type="match status" value="1"/>
</dbReference>
<dbReference type="PANTHER" id="PTHR11741">
    <property type="entry name" value="ELONGATION FACTOR TS"/>
    <property type="match status" value="1"/>
</dbReference>
<dbReference type="PANTHER" id="PTHR11741:SF0">
    <property type="entry name" value="ELONGATION FACTOR TS, MITOCHONDRIAL"/>
    <property type="match status" value="1"/>
</dbReference>
<dbReference type="Pfam" id="PF00889">
    <property type="entry name" value="EF_TS"/>
    <property type="match status" value="1"/>
</dbReference>
<dbReference type="SUPFAM" id="SSF54713">
    <property type="entry name" value="Elongation factor Ts (EF-Ts), dimerisation domain"/>
    <property type="match status" value="2"/>
</dbReference>
<dbReference type="SUPFAM" id="SSF46934">
    <property type="entry name" value="UBA-like"/>
    <property type="match status" value="1"/>
</dbReference>
<dbReference type="PROSITE" id="PS01127">
    <property type="entry name" value="EF_TS_2"/>
    <property type="match status" value="1"/>
</dbReference>
<keyword id="KW-0963">Cytoplasm</keyword>
<keyword id="KW-0251">Elongation factor</keyword>
<keyword id="KW-0648">Protein biosynthesis</keyword>
<name>EFTS_CUPTR</name>
<proteinExistence type="inferred from homology"/>
<comment type="function">
    <text evidence="1">Associates with the EF-Tu.GDP complex and induces the exchange of GDP to GTP. It remains bound to the aminoacyl-tRNA.EF-Tu.GTP complex up to the GTP hydrolysis stage on the ribosome.</text>
</comment>
<comment type="subcellular location">
    <subcellularLocation>
        <location evidence="1">Cytoplasm</location>
    </subcellularLocation>
</comment>
<comment type="similarity">
    <text evidence="1">Belongs to the EF-Ts family.</text>
</comment>
<organism>
    <name type="scientific">Cupriavidus taiwanensis (strain DSM 17343 / BCRC 17206 / CCUG 44338 / CIP 107171 / LMG 19424 / R1)</name>
    <name type="common">Ralstonia taiwanensis (strain LMG 19424)</name>
    <dbReference type="NCBI Taxonomy" id="977880"/>
    <lineage>
        <taxon>Bacteria</taxon>
        <taxon>Pseudomonadati</taxon>
        <taxon>Pseudomonadota</taxon>
        <taxon>Betaproteobacteria</taxon>
        <taxon>Burkholderiales</taxon>
        <taxon>Burkholderiaceae</taxon>
        <taxon>Cupriavidus</taxon>
    </lineage>
</organism>
<gene>
    <name evidence="1" type="primary">tsf</name>
    <name type="ordered locus">RALTA_A1690</name>
</gene>